<organism>
    <name type="scientific">Saccharolobus islandicus (strain REY15A)</name>
    <name type="common">Sulfolobus islandicus</name>
    <dbReference type="NCBI Taxonomy" id="930945"/>
    <lineage>
        <taxon>Archaea</taxon>
        <taxon>Thermoproteota</taxon>
        <taxon>Thermoprotei</taxon>
        <taxon>Sulfolobales</taxon>
        <taxon>Sulfolobaceae</taxon>
        <taxon>Saccharolobus</taxon>
    </lineage>
</organism>
<name>HJC_SACI5</name>
<proteinExistence type="inferred from homology"/>
<dbReference type="EC" id="3.1.21.10" evidence="2"/>
<dbReference type="EMBL" id="CP002425">
    <property type="protein sequence ID" value="ADX85497.1"/>
    <property type="molecule type" value="Genomic_DNA"/>
</dbReference>
<dbReference type="RefSeq" id="WP_012711550.1">
    <property type="nucleotide sequence ID" value="NC_017276.1"/>
</dbReference>
<dbReference type="SMR" id="F0NID3"/>
<dbReference type="STRING" id="930945.SiRe_1431"/>
<dbReference type="GeneID" id="84061867"/>
<dbReference type="KEGG" id="sir:SiRe_1431"/>
<dbReference type="eggNOG" id="arCOG00919">
    <property type="taxonomic scope" value="Archaea"/>
</dbReference>
<dbReference type="HOGENOM" id="CLU_139546_1_0_2"/>
<dbReference type="BRENDA" id="3.1.21.10">
    <property type="organism ID" value="8240"/>
</dbReference>
<dbReference type="Proteomes" id="UP000002664">
    <property type="component" value="Chromosome"/>
</dbReference>
<dbReference type="GO" id="GO:0008821">
    <property type="term" value="F:crossover junction DNA endonuclease activity"/>
    <property type="evidence" value="ECO:0000314"/>
    <property type="project" value="UniProtKB"/>
</dbReference>
<dbReference type="GO" id="GO:0003677">
    <property type="term" value="F:DNA binding"/>
    <property type="evidence" value="ECO:0007669"/>
    <property type="project" value="UniProtKB-KW"/>
</dbReference>
<dbReference type="GO" id="GO:0000287">
    <property type="term" value="F:magnesium ion binding"/>
    <property type="evidence" value="ECO:0007669"/>
    <property type="project" value="UniProtKB-UniRule"/>
</dbReference>
<dbReference type="GO" id="GO:0006310">
    <property type="term" value="P:DNA recombination"/>
    <property type="evidence" value="ECO:0007669"/>
    <property type="project" value="UniProtKB-UniRule"/>
</dbReference>
<dbReference type="GO" id="GO:0006281">
    <property type="term" value="P:DNA repair"/>
    <property type="evidence" value="ECO:0007669"/>
    <property type="project" value="UniProtKB-UniRule"/>
</dbReference>
<dbReference type="CDD" id="cd00523">
    <property type="entry name" value="Holliday_junction_resolvase"/>
    <property type="match status" value="1"/>
</dbReference>
<dbReference type="Gene3D" id="3.40.1350.10">
    <property type="match status" value="1"/>
</dbReference>
<dbReference type="HAMAP" id="MF_01490">
    <property type="entry name" value="HJ_Resolv_Hjc"/>
    <property type="match status" value="1"/>
</dbReference>
<dbReference type="InterPro" id="IPR002732">
    <property type="entry name" value="Hjc"/>
</dbReference>
<dbReference type="InterPro" id="IPR014428">
    <property type="entry name" value="Hjc_arc"/>
</dbReference>
<dbReference type="InterPro" id="IPR011335">
    <property type="entry name" value="Restrct_endonuc-II-like"/>
</dbReference>
<dbReference type="InterPro" id="IPR011856">
    <property type="entry name" value="tRNA_endonuc-like_dom_sf"/>
</dbReference>
<dbReference type="NCBIfam" id="NF040854">
    <property type="entry name" value="Hol_resolv_Hjc"/>
    <property type="match status" value="1"/>
</dbReference>
<dbReference type="PANTHER" id="PTHR39651">
    <property type="entry name" value="HOLLIDAY JUNCTION RESOLVASE HJC"/>
    <property type="match status" value="1"/>
</dbReference>
<dbReference type="PANTHER" id="PTHR39651:SF1">
    <property type="entry name" value="HOLLIDAY JUNCTION RESOLVASE HJC"/>
    <property type="match status" value="1"/>
</dbReference>
<dbReference type="Pfam" id="PF01870">
    <property type="entry name" value="Hjc"/>
    <property type="match status" value="1"/>
</dbReference>
<dbReference type="PIRSF" id="PIRSF004985">
    <property type="entry name" value="Hlld_jn_rslvs_ar"/>
    <property type="match status" value="1"/>
</dbReference>
<dbReference type="SUPFAM" id="SSF52980">
    <property type="entry name" value="Restriction endonuclease-like"/>
    <property type="match status" value="1"/>
</dbReference>
<reference key="1">
    <citation type="journal article" date="2011" name="J. Bacteriol.">
        <title>Genome analyses of icelandic strains of Sulfolobus islandicus, model organisms for genetic and virus-host interaction studies.</title>
        <authorList>
            <person name="Guo L."/>
            <person name="Brugger K."/>
            <person name="Liu C."/>
            <person name="Shah S.A."/>
            <person name="Zheng H."/>
            <person name="Zhu Y."/>
            <person name="Wang S."/>
            <person name="Lillestol R.K."/>
            <person name="Chen L."/>
            <person name="Frank J."/>
            <person name="Prangishvili D."/>
            <person name="Paulin L."/>
            <person name="She Q."/>
            <person name="Huang L."/>
            <person name="Garrett R.A."/>
        </authorList>
    </citation>
    <scope>NUCLEOTIDE SEQUENCE [LARGE SCALE GENOMIC DNA]</scope>
    <source>
        <strain>REY15A</strain>
    </source>
</reference>
<reference key="2">
    <citation type="journal article" date="2012" name="DNA Repair">
        <title>Dissection of the functional domains of an archaeal Holliday junction helicase.</title>
        <authorList>
            <person name="Hong Y."/>
            <person name="Chu M."/>
            <person name="Li Y."/>
            <person name="Ni J."/>
            <person name="Sheng D."/>
            <person name="Hou G."/>
            <person name="She Q."/>
            <person name="Shen Y."/>
        </authorList>
    </citation>
    <scope>DISRUPTION PHENOTYPE</scope>
    <source>
        <strain>REY15A / E233S</strain>
    </source>
</reference>
<reference key="3">
    <citation type="journal article" date="2013" name="Biochem. Soc. Trans.">
        <title>Genetic manipulation in Sulfolobus islandicus and functional analysis of DNA repair genes.</title>
        <authorList>
            <person name="Zhang C."/>
            <person name="Tian B."/>
            <person name="Li S."/>
            <person name="Ao X."/>
            <person name="Dalgaard K."/>
            <person name="Gokce S."/>
            <person name="Liang Y."/>
            <person name="She Q."/>
        </authorList>
    </citation>
    <scope>DISRUPTION PHENOTYPE</scope>
    <source>
        <strain>REY15A</strain>
    </source>
</reference>
<reference key="4">
    <citation type="journal article" date="2018" name="Nucleic Acids Res.">
        <title>The archaeal ATPase PINA interacts with the helicase Hjm via its carboxyl terminal KH domain remodeling and processing replication fork and Holliday junction.</title>
        <authorList>
            <person name="Zhai B."/>
            <person name="DuPrez K."/>
            <person name="Han X."/>
            <person name="Yuan Z."/>
            <person name="Ahmad S."/>
            <person name="Xu C."/>
            <person name="Gu L."/>
            <person name="Ni J."/>
            <person name="Fan L."/>
            <person name="Shen Y."/>
        </authorList>
    </citation>
    <scope>FUNCTION</scope>
    <source>
        <strain>REY15A / E233S</strain>
    </source>
</reference>
<evidence type="ECO:0000255" key="1"/>
<evidence type="ECO:0000255" key="2">
    <source>
        <dbReference type="HAMAP-Rule" id="MF_01490"/>
    </source>
</evidence>
<evidence type="ECO:0000269" key="3">
    <source>
    </source>
</evidence>
<evidence type="ECO:0000269" key="4">
    <source>
    </source>
</evidence>
<evidence type="ECO:0000269" key="5">
    <source>
    </source>
</evidence>
<evidence type="ECO:0000303" key="6">
    <source>
    </source>
</evidence>
<comment type="function">
    <text evidence="2">A structure-specific endonuclease that resolves Holliday junction (HJ) intermediates during genetic recombination. Cleaves 4-way DNA junctions introducing paired nicks in opposing strands, leaving a 5'-terminal phosphate and a 3'-terminal hydroxyl group that are subsequently ligated to produce recombinant products.</text>
</comment>
<comment type="function">
    <text evidence="5">Hjc, Hjm (Hel308) and PINA coordinate HJ migration and cleavage of replication forks in a coordinated way (PubMed:29846688).</text>
</comment>
<comment type="catalytic activity">
    <reaction evidence="2">
        <text>Endonucleolytic cleavage at a junction such as a reciprocal single-stranded crossover between two homologous DNA duplexes (Holliday junction).</text>
        <dbReference type="EC" id="3.1.21.10"/>
    </reaction>
</comment>
<comment type="cofactor">
    <cofactor evidence="2">
        <name>Mg(2+)</name>
        <dbReference type="ChEBI" id="CHEBI:18420"/>
    </cofactor>
    <text evidence="2">Binds 1 Mg(2+) ion per subunit.</text>
</comment>
<comment type="subunit">
    <text evidence="2">Homodimer.</text>
</comment>
<comment type="disruption phenotype">
    <text evidence="3 4">Not essential, it can be disrupted.</text>
</comment>
<comment type="similarity">
    <text evidence="2">Belongs to the Holliday junction resolvase Hjc family.</text>
</comment>
<sequence>MNAKKRKGSAVERNIVGKLRDKGFAVVRAPASGSKRKDPIPDIIALKSGVIILIEMKSRKDKEGKIYVRREQAEGIMEFARKSGGTLFLGVKKPGVLKFIPFDKLRRTETGNYVADSEIEGLDLEDLVRLVEAKVSKTLDNFL</sequence>
<protein>
    <recommendedName>
        <fullName evidence="2">Crossover junction endodeoxyribonuclease Hjc</fullName>
        <shortName evidence="2 6">Hjc</shortName>
        <ecNumber evidence="2">3.1.21.10</ecNumber>
    </recommendedName>
    <alternativeName>
        <fullName evidence="2">Holliday junction resolvase Hjc</fullName>
    </alternativeName>
</protein>
<gene>
    <name evidence="2" type="primary">hjc</name>
    <name type="ordered locus">SiRe_1431</name>
</gene>
<keyword id="KW-0227">DNA damage</keyword>
<keyword id="KW-0233">DNA recombination</keyword>
<keyword id="KW-0234">DNA repair</keyword>
<keyword id="KW-0238">DNA-binding</keyword>
<keyword id="KW-0255">Endonuclease</keyword>
<keyword id="KW-0378">Hydrolase</keyword>
<keyword id="KW-0460">Magnesium</keyword>
<keyword id="KW-0479">Metal-binding</keyword>
<keyword id="KW-0540">Nuclease</keyword>
<accession>F0NID3</accession>
<feature type="chain" id="PRO_0000429157" description="Crossover junction endodeoxyribonuclease Hjc">
    <location>
        <begin position="1"/>
        <end position="143"/>
    </location>
</feature>
<feature type="active site" evidence="2">
    <location>
        <position position="32"/>
    </location>
</feature>
<feature type="binding site" evidence="2">
    <location>
        <position position="12"/>
    </location>
    <ligand>
        <name>Mg(2+)</name>
        <dbReference type="ChEBI" id="CHEBI:18420"/>
    </ligand>
</feature>
<feature type="binding site" evidence="2">
    <location>
        <position position="42"/>
    </location>
    <ligand>
        <name>Mg(2+)</name>
        <dbReference type="ChEBI" id="CHEBI:18420"/>
    </ligand>
</feature>
<feature type="binding site" evidence="2">
    <location>
        <position position="55"/>
    </location>
    <ligand>
        <name>Mg(2+)</name>
        <dbReference type="ChEBI" id="CHEBI:18420"/>
    </ligand>
</feature>
<feature type="site" description="Transition state stabilizer" evidence="1">
    <location>
        <position position="57"/>
    </location>
</feature>